<evidence type="ECO:0000255" key="1">
    <source>
        <dbReference type="HAMAP-Rule" id="MF_00532"/>
    </source>
</evidence>
<evidence type="ECO:0000305" key="2"/>
<comment type="similarity">
    <text evidence="1">Belongs to the universal ribosomal protein uS9 family.</text>
</comment>
<gene>
    <name evidence="1" type="primary">rpsI</name>
    <name type="ordered locus">YPTS_3692</name>
</gene>
<keyword id="KW-0687">Ribonucleoprotein</keyword>
<keyword id="KW-0689">Ribosomal protein</keyword>
<protein>
    <recommendedName>
        <fullName evidence="1">Small ribosomal subunit protein uS9</fullName>
    </recommendedName>
    <alternativeName>
        <fullName evidence="2">30S ribosomal protein S9</fullName>
    </alternativeName>
</protein>
<accession>B2K3Z6</accession>
<proteinExistence type="inferred from homology"/>
<name>RS9_YERPB</name>
<feature type="chain" id="PRO_1000128200" description="Small ribosomal subunit protein uS9">
    <location>
        <begin position="1"/>
        <end position="130"/>
    </location>
</feature>
<dbReference type="EMBL" id="CP001048">
    <property type="protein sequence ID" value="ACC90645.1"/>
    <property type="molecule type" value="Genomic_DNA"/>
</dbReference>
<dbReference type="RefSeq" id="WP_002210133.1">
    <property type="nucleotide sequence ID" value="NZ_CP009780.1"/>
</dbReference>
<dbReference type="SMR" id="B2K3Z6"/>
<dbReference type="GeneID" id="96662997"/>
<dbReference type="KEGG" id="ypb:YPTS_3692"/>
<dbReference type="PATRIC" id="fig|502801.10.peg.3150"/>
<dbReference type="GO" id="GO:0022627">
    <property type="term" value="C:cytosolic small ribosomal subunit"/>
    <property type="evidence" value="ECO:0007669"/>
    <property type="project" value="TreeGrafter"/>
</dbReference>
<dbReference type="GO" id="GO:0003723">
    <property type="term" value="F:RNA binding"/>
    <property type="evidence" value="ECO:0007669"/>
    <property type="project" value="TreeGrafter"/>
</dbReference>
<dbReference type="GO" id="GO:0003735">
    <property type="term" value="F:structural constituent of ribosome"/>
    <property type="evidence" value="ECO:0007669"/>
    <property type="project" value="InterPro"/>
</dbReference>
<dbReference type="GO" id="GO:0006412">
    <property type="term" value="P:translation"/>
    <property type="evidence" value="ECO:0007669"/>
    <property type="project" value="UniProtKB-UniRule"/>
</dbReference>
<dbReference type="FunFam" id="3.30.230.10:FF:000001">
    <property type="entry name" value="30S ribosomal protein S9"/>
    <property type="match status" value="1"/>
</dbReference>
<dbReference type="Gene3D" id="3.30.230.10">
    <property type="match status" value="1"/>
</dbReference>
<dbReference type="HAMAP" id="MF_00532_B">
    <property type="entry name" value="Ribosomal_uS9_B"/>
    <property type="match status" value="1"/>
</dbReference>
<dbReference type="InterPro" id="IPR020568">
    <property type="entry name" value="Ribosomal_Su5_D2-typ_SF"/>
</dbReference>
<dbReference type="InterPro" id="IPR000754">
    <property type="entry name" value="Ribosomal_uS9"/>
</dbReference>
<dbReference type="InterPro" id="IPR023035">
    <property type="entry name" value="Ribosomal_uS9_bac/plastid"/>
</dbReference>
<dbReference type="InterPro" id="IPR020574">
    <property type="entry name" value="Ribosomal_uS9_CS"/>
</dbReference>
<dbReference type="InterPro" id="IPR014721">
    <property type="entry name" value="Ribsml_uS5_D2-typ_fold_subgr"/>
</dbReference>
<dbReference type="NCBIfam" id="NF001099">
    <property type="entry name" value="PRK00132.1"/>
    <property type="match status" value="1"/>
</dbReference>
<dbReference type="PANTHER" id="PTHR21569">
    <property type="entry name" value="RIBOSOMAL PROTEIN S9"/>
    <property type="match status" value="1"/>
</dbReference>
<dbReference type="PANTHER" id="PTHR21569:SF1">
    <property type="entry name" value="SMALL RIBOSOMAL SUBUNIT PROTEIN US9M"/>
    <property type="match status" value="1"/>
</dbReference>
<dbReference type="Pfam" id="PF00380">
    <property type="entry name" value="Ribosomal_S9"/>
    <property type="match status" value="1"/>
</dbReference>
<dbReference type="SUPFAM" id="SSF54211">
    <property type="entry name" value="Ribosomal protein S5 domain 2-like"/>
    <property type="match status" value="1"/>
</dbReference>
<dbReference type="PROSITE" id="PS00360">
    <property type="entry name" value="RIBOSOMAL_S9"/>
    <property type="match status" value="1"/>
</dbReference>
<sequence length="130" mass="14769">MAENQYYGTGRRKSSSARVFLKPGSGKIVINQRSLEVYFGRETARMVVNQPLELVDMVTKFDMYITVKGGGISGQAGAIRHGITRALMEYDESLRGELRKAGFVTRDAREVERKKVGLRKARRRPQFSKR</sequence>
<reference key="1">
    <citation type="submission" date="2008-04" db="EMBL/GenBank/DDBJ databases">
        <title>Complete sequence of Yersinia pseudotuberculosis PB1/+.</title>
        <authorList>
            <person name="Copeland A."/>
            <person name="Lucas S."/>
            <person name="Lapidus A."/>
            <person name="Glavina del Rio T."/>
            <person name="Dalin E."/>
            <person name="Tice H."/>
            <person name="Bruce D."/>
            <person name="Goodwin L."/>
            <person name="Pitluck S."/>
            <person name="Munk A.C."/>
            <person name="Brettin T."/>
            <person name="Detter J.C."/>
            <person name="Han C."/>
            <person name="Tapia R."/>
            <person name="Schmutz J."/>
            <person name="Larimer F."/>
            <person name="Land M."/>
            <person name="Hauser L."/>
            <person name="Challacombe J.F."/>
            <person name="Green L."/>
            <person name="Lindler L.E."/>
            <person name="Nikolich M.P."/>
            <person name="Richardson P."/>
        </authorList>
    </citation>
    <scope>NUCLEOTIDE SEQUENCE [LARGE SCALE GENOMIC DNA]</scope>
    <source>
        <strain>PB1/+</strain>
    </source>
</reference>
<organism>
    <name type="scientific">Yersinia pseudotuberculosis serotype IB (strain PB1/+)</name>
    <dbReference type="NCBI Taxonomy" id="502801"/>
    <lineage>
        <taxon>Bacteria</taxon>
        <taxon>Pseudomonadati</taxon>
        <taxon>Pseudomonadota</taxon>
        <taxon>Gammaproteobacteria</taxon>
        <taxon>Enterobacterales</taxon>
        <taxon>Yersiniaceae</taxon>
        <taxon>Yersinia</taxon>
    </lineage>
</organism>